<sequence length="118" mass="13686">MPRVKGGTVTRARRKKTIKLAKGYFGSKHTLYKVAKQQVMKSGQYAFRDRRQRKRDFRKLWITRINAAARQHEMSYSRLMNGLKKAGIDINRKMLSEIAISDEKAFAQLVTKAKDALK</sequence>
<feature type="chain" id="PRO_1000080100" description="Large ribosomal subunit protein bL20">
    <location>
        <begin position="1"/>
        <end position="118"/>
    </location>
</feature>
<keyword id="KW-0687">Ribonucleoprotein</keyword>
<keyword id="KW-0689">Ribosomal protein</keyword>
<keyword id="KW-0694">RNA-binding</keyword>
<keyword id="KW-0699">rRNA-binding</keyword>
<protein>
    <recommendedName>
        <fullName evidence="1">Large ribosomal subunit protein bL20</fullName>
    </recommendedName>
    <alternativeName>
        <fullName evidence="2">50S ribosomal protein L20</fullName>
    </alternativeName>
</protein>
<reference key="1">
    <citation type="submission" date="2007-05" db="EMBL/GenBank/DDBJ databases">
        <title>Complete sequence of chromosome of Staphylococcus aureus subsp. aureus JH9.</title>
        <authorList>
            <consortium name="US DOE Joint Genome Institute"/>
            <person name="Copeland A."/>
            <person name="Lucas S."/>
            <person name="Lapidus A."/>
            <person name="Barry K."/>
            <person name="Detter J.C."/>
            <person name="Glavina del Rio T."/>
            <person name="Hammon N."/>
            <person name="Israni S."/>
            <person name="Pitluck S."/>
            <person name="Chain P."/>
            <person name="Malfatti S."/>
            <person name="Shin M."/>
            <person name="Vergez L."/>
            <person name="Schmutz J."/>
            <person name="Larimer F."/>
            <person name="Land M."/>
            <person name="Hauser L."/>
            <person name="Kyrpides N."/>
            <person name="Kim E."/>
            <person name="Tomasz A."/>
            <person name="Richardson P."/>
        </authorList>
    </citation>
    <scope>NUCLEOTIDE SEQUENCE [LARGE SCALE GENOMIC DNA]</scope>
    <source>
        <strain>JH9</strain>
    </source>
</reference>
<gene>
    <name evidence="1" type="primary">rplT</name>
    <name type="ordered locus">SaurJH9_1736</name>
</gene>
<name>RL20_STAA9</name>
<accession>A5ITK3</accession>
<comment type="function">
    <text evidence="1">Binds directly to 23S ribosomal RNA and is necessary for the in vitro assembly process of the 50S ribosomal subunit. It is not involved in the protein synthesizing functions of that subunit.</text>
</comment>
<comment type="similarity">
    <text evidence="1">Belongs to the bacterial ribosomal protein bL20 family.</text>
</comment>
<dbReference type="EMBL" id="CP000703">
    <property type="protein sequence ID" value="ABQ49526.1"/>
    <property type="molecule type" value="Genomic_DNA"/>
</dbReference>
<dbReference type="RefSeq" id="WP_001138360.1">
    <property type="nucleotide sequence ID" value="NC_009487.1"/>
</dbReference>
<dbReference type="SMR" id="A5ITK3"/>
<dbReference type="GeneID" id="98346040"/>
<dbReference type="KEGG" id="saj:SaurJH9_1736"/>
<dbReference type="HOGENOM" id="CLU_123265_0_1_9"/>
<dbReference type="GO" id="GO:1990904">
    <property type="term" value="C:ribonucleoprotein complex"/>
    <property type="evidence" value="ECO:0007669"/>
    <property type="project" value="UniProtKB-KW"/>
</dbReference>
<dbReference type="GO" id="GO:0005840">
    <property type="term" value="C:ribosome"/>
    <property type="evidence" value="ECO:0007669"/>
    <property type="project" value="UniProtKB-KW"/>
</dbReference>
<dbReference type="GO" id="GO:0019843">
    <property type="term" value="F:rRNA binding"/>
    <property type="evidence" value="ECO:0007669"/>
    <property type="project" value="UniProtKB-UniRule"/>
</dbReference>
<dbReference type="GO" id="GO:0003735">
    <property type="term" value="F:structural constituent of ribosome"/>
    <property type="evidence" value="ECO:0007669"/>
    <property type="project" value="InterPro"/>
</dbReference>
<dbReference type="GO" id="GO:0000027">
    <property type="term" value="P:ribosomal large subunit assembly"/>
    <property type="evidence" value="ECO:0007669"/>
    <property type="project" value="UniProtKB-UniRule"/>
</dbReference>
<dbReference type="GO" id="GO:0006412">
    <property type="term" value="P:translation"/>
    <property type="evidence" value="ECO:0007669"/>
    <property type="project" value="InterPro"/>
</dbReference>
<dbReference type="CDD" id="cd07026">
    <property type="entry name" value="Ribosomal_L20"/>
    <property type="match status" value="1"/>
</dbReference>
<dbReference type="FunFam" id="1.10.1900.20:FF:000001">
    <property type="entry name" value="50S ribosomal protein L20"/>
    <property type="match status" value="1"/>
</dbReference>
<dbReference type="Gene3D" id="6.10.160.10">
    <property type="match status" value="1"/>
</dbReference>
<dbReference type="Gene3D" id="1.10.1900.20">
    <property type="entry name" value="Ribosomal protein L20"/>
    <property type="match status" value="1"/>
</dbReference>
<dbReference type="HAMAP" id="MF_00382">
    <property type="entry name" value="Ribosomal_bL20"/>
    <property type="match status" value="1"/>
</dbReference>
<dbReference type="InterPro" id="IPR005813">
    <property type="entry name" value="Ribosomal_bL20"/>
</dbReference>
<dbReference type="InterPro" id="IPR049946">
    <property type="entry name" value="RIBOSOMAL_L20_CS"/>
</dbReference>
<dbReference type="InterPro" id="IPR035566">
    <property type="entry name" value="Ribosomal_protein_bL20_C"/>
</dbReference>
<dbReference type="NCBIfam" id="TIGR01032">
    <property type="entry name" value="rplT_bact"/>
    <property type="match status" value="1"/>
</dbReference>
<dbReference type="PANTHER" id="PTHR10986">
    <property type="entry name" value="39S RIBOSOMAL PROTEIN L20"/>
    <property type="match status" value="1"/>
</dbReference>
<dbReference type="Pfam" id="PF00453">
    <property type="entry name" value="Ribosomal_L20"/>
    <property type="match status" value="1"/>
</dbReference>
<dbReference type="PRINTS" id="PR00062">
    <property type="entry name" value="RIBOSOMALL20"/>
</dbReference>
<dbReference type="SUPFAM" id="SSF74731">
    <property type="entry name" value="Ribosomal protein L20"/>
    <property type="match status" value="1"/>
</dbReference>
<dbReference type="PROSITE" id="PS00937">
    <property type="entry name" value="RIBOSOMAL_L20"/>
    <property type="match status" value="1"/>
</dbReference>
<proteinExistence type="inferred from homology"/>
<evidence type="ECO:0000255" key="1">
    <source>
        <dbReference type="HAMAP-Rule" id="MF_00382"/>
    </source>
</evidence>
<evidence type="ECO:0000305" key="2"/>
<organism>
    <name type="scientific">Staphylococcus aureus (strain JH9)</name>
    <dbReference type="NCBI Taxonomy" id="359786"/>
    <lineage>
        <taxon>Bacteria</taxon>
        <taxon>Bacillati</taxon>
        <taxon>Bacillota</taxon>
        <taxon>Bacilli</taxon>
        <taxon>Bacillales</taxon>
        <taxon>Staphylococcaceae</taxon>
        <taxon>Staphylococcus</taxon>
    </lineage>
</organism>